<comment type="function">
    <text evidence="1">Involved in the restart of stalled replication forks, which reloads the replicative helicase on sites other than the origin of replication. Can function in multiple replication restart pathways. Displaces ssDNA from a PriB-ssDNA complex. Probably forms a spiral filament on ssDNA.</text>
</comment>
<comment type="subunit">
    <text evidence="1">Homooligomerizes. Interacts with PriB. Component of the replication restart primosome. Primosome assembly occurs via a 'hand-off' mechanism. PriA binds to replication forks, subsequently PriB then DnaT bind; DnaT then displaces ssDNA to generate the helicase loading substrate.</text>
</comment>
<comment type="similarity">
    <text evidence="1">Belongs to the DnaT family.</text>
</comment>
<evidence type="ECO:0000255" key="1">
    <source>
        <dbReference type="HAMAP-Rule" id="MF_01061"/>
    </source>
</evidence>
<evidence type="ECO:0000256" key="2">
    <source>
        <dbReference type="SAM" id="MobiDB-lite"/>
    </source>
</evidence>
<gene>
    <name evidence="1" type="primary">dnaT</name>
    <name type="ordered locus">EcE24377A_4955</name>
</gene>
<keyword id="KW-0235">DNA replication</keyword>
<keyword id="KW-0238">DNA-binding</keyword>
<keyword id="KW-0639">Primosome</keyword>
<keyword id="KW-1185">Reference proteome</keyword>
<accession>A7ZVQ2</accession>
<feature type="chain" id="PRO_1000064461" description="Replication restart protein DnaT">
    <location>
        <begin position="1"/>
        <end position="179"/>
    </location>
</feature>
<feature type="region of interest" description="Disordered" evidence="2">
    <location>
        <begin position="156"/>
        <end position="179"/>
    </location>
</feature>
<protein>
    <recommendedName>
        <fullName evidence="1">Replication restart protein DnaT</fullName>
    </recommendedName>
</protein>
<organism>
    <name type="scientific">Escherichia coli O139:H28 (strain E24377A / ETEC)</name>
    <dbReference type="NCBI Taxonomy" id="331111"/>
    <lineage>
        <taxon>Bacteria</taxon>
        <taxon>Pseudomonadati</taxon>
        <taxon>Pseudomonadota</taxon>
        <taxon>Gammaproteobacteria</taxon>
        <taxon>Enterobacterales</taxon>
        <taxon>Enterobacteriaceae</taxon>
        <taxon>Escherichia</taxon>
    </lineage>
</organism>
<reference key="1">
    <citation type="journal article" date="2008" name="J. Bacteriol.">
        <title>The pangenome structure of Escherichia coli: comparative genomic analysis of E. coli commensal and pathogenic isolates.</title>
        <authorList>
            <person name="Rasko D.A."/>
            <person name="Rosovitz M.J."/>
            <person name="Myers G.S.A."/>
            <person name="Mongodin E.F."/>
            <person name="Fricke W.F."/>
            <person name="Gajer P."/>
            <person name="Crabtree J."/>
            <person name="Sebaihia M."/>
            <person name="Thomson N.R."/>
            <person name="Chaudhuri R."/>
            <person name="Henderson I.R."/>
            <person name="Sperandio V."/>
            <person name="Ravel J."/>
        </authorList>
    </citation>
    <scope>NUCLEOTIDE SEQUENCE [LARGE SCALE GENOMIC DNA]</scope>
    <source>
        <strain>E24377A / ETEC</strain>
    </source>
</reference>
<name>DNAT_ECO24</name>
<proteinExistence type="inferred from homology"/>
<sequence length="179" mass="19455">MSSRVLTPDVVGIDALVHDHQTVLAKAEGGVVAVFANNAPAFYAVTPARLAELLALEEKLARPGSDVALDDQLYQEPQAAPVAVPMGKFAMYPDWQPDADFIRLAALWGVALREPVTTEELASFIAYWQAEGKVFHHVQWQQKLARSLQIGRASNGGLPKRDVNTVSEPDSQIPPGFRG</sequence>
<dbReference type="EMBL" id="CP000800">
    <property type="protein sequence ID" value="ABV18613.1"/>
    <property type="molecule type" value="Genomic_DNA"/>
</dbReference>
<dbReference type="RefSeq" id="WP_000098818.1">
    <property type="nucleotide sequence ID" value="NC_009801.1"/>
</dbReference>
<dbReference type="BMRB" id="A7ZVQ2"/>
<dbReference type="SMR" id="A7ZVQ2"/>
<dbReference type="GeneID" id="93777486"/>
<dbReference type="KEGG" id="ecw:EcE24377A_4955"/>
<dbReference type="HOGENOM" id="CLU_1501592_0_0_6"/>
<dbReference type="Proteomes" id="UP000001122">
    <property type="component" value="Chromosome"/>
</dbReference>
<dbReference type="GO" id="GO:1990077">
    <property type="term" value="C:primosome complex"/>
    <property type="evidence" value="ECO:0007669"/>
    <property type="project" value="UniProtKB-KW"/>
</dbReference>
<dbReference type="GO" id="GO:0006269">
    <property type="term" value="P:DNA replication, synthesis of primer"/>
    <property type="evidence" value="ECO:0007669"/>
    <property type="project" value="UniProtKB-UniRule"/>
</dbReference>
<dbReference type="FunFam" id="1.10.8.1180:FF:000001">
    <property type="entry name" value="Primosomal protein 1"/>
    <property type="match status" value="1"/>
</dbReference>
<dbReference type="Gene3D" id="1.10.8.1180">
    <property type="match status" value="1"/>
</dbReference>
<dbReference type="HAMAP" id="MF_01061">
    <property type="entry name" value="DnaT"/>
    <property type="match status" value="1"/>
</dbReference>
<dbReference type="InterPro" id="IPR020917">
    <property type="entry name" value="DnaT"/>
</dbReference>
<dbReference type="InterPro" id="IPR040480">
    <property type="entry name" value="DnaT_DNA_bind"/>
</dbReference>
<dbReference type="NCBIfam" id="NF002770">
    <property type="entry name" value="PRK02854.1"/>
    <property type="match status" value="1"/>
</dbReference>
<dbReference type="Pfam" id="PF17948">
    <property type="entry name" value="DnaT"/>
    <property type="match status" value="1"/>
</dbReference>